<sequence length="407" mass="46130">MKSFFKPVIIKKFLWTLFFLFIYVLGTKLTLPFVDMSKAAAMDGTSTTLNYATALMGGNLRSMSLFSVGLSPWMSSMLIWQMFAVSKRLGLSKLPLEVQERRRMLLTLVIALIQSVALVLNLPLQEAAGVDMTTIMVLDTLVLMAGTYFLIWLTDLNAAMGLGGSIMIVMASMIAYIPQDIWNSIQELKISSLWLALMLVFSLVFLYLAVTVERSKYRIPVNKINIHNRFKKYSYLDIRLNPAGGMPIMYAMTLVSIPQYFLLIIHFLQPENQLIEQWIEALSMGSPAWFILYLLTIFILALAFAFINISGDQIAERMQKSGEYIENVYPGGATRRYINGLVTYFALVGAFYLILISGLPMMVVLVDIRYLRLSMIPGIFMIFIGMVFSIKDEVEALTLNDRYRSLL</sequence>
<accession>A3CM55</accession>
<dbReference type="EMBL" id="CP000387">
    <property type="protein sequence ID" value="ABN44260.1"/>
    <property type="molecule type" value="Genomic_DNA"/>
</dbReference>
<dbReference type="RefSeq" id="WP_011836742.1">
    <property type="nucleotide sequence ID" value="NC_009009.1"/>
</dbReference>
<dbReference type="RefSeq" id="YP_001034810.1">
    <property type="nucleotide sequence ID" value="NC_009009.1"/>
</dbReference>
<dbReference type="STRING" id="388919.SSA_0832"/>
<dbReference type="KEGG" id="ssa:SSA_0832"/>
<dbReference type="PATRIC" id="fig|388919.9.peg.795"/>
<dbReference type="eggNOG" id="COG0201">
    <property type="taxonomic scope" value="Bacteria"/>
</dbReference>
<dbReference type="HOGENOM" id="CLU_030313_4_0_9"/>
<dbReference type="OrthoDB" id="2055747at2"/>
<dbReference type="Proteomes" id="UP000002148">
    <property type="component" value="Chromosome"/>
</dbReference>
<dbReference type="GO" id="GO:0005886">
    <property type="term" value="C:plasma membrane"/>
    <property type="evidence" value="ECO:0007669"/>
    <property type="project" value="UniProtKB-SubCell"/>
</dbReference>
<dbReference type="GO" id="GO:0065002">
    <property type="term" value="P:intracellular protein transmembrane transport"/>
    <property type="evidence" value="ECO:0007669"/>
    <property type="project" value="UniProtKB-UniRule"/>
</dbReference>
<dbReference type="GO" id="GO:0006605">
    <property type="term" value="P:protein targeting"/>
    <property type="evidence" value="ECO:0007669"/>
    <property type="project" value="UniProtKB-UniRule"/>
</dbReference>
<dbReference type="Gene3D" id="1.10.3370.10">
    <property type="entry name" value="SecY subunit domain"/>
    <property type="match status" value="1"/>
</dbReference>
<dbReference type="HAMAP" id="MF_01466">
    <property type="entry name" value="SecY2"/>
    <property type="match status" value="1"/>
</dbReference>
<dbReference type="InterPro" id="IPR002208">
    <property type="entry name" value="SecY/SEC61-alpha"/>
</dbReference>
<dbReference type="InterPro" id="IPR014269">
    <property type="entry name" value="SecY2"/>
</dbReference>
<dbReference type="InterPro" id="IPR023201">
    <property type="entry name" value="SecY_dom_sf"/>
</dbReference>
<dbReference type="NCBIfam" id="TIGR02920">
    <property type="entry name" value="acc_sec_Y2"/>
    <property type="match status" value="1"/>
</dbReference>
<dbReference type="NCBIfam" id="NF009082">
    <property type="entry name" value="PRK12417.1"/>
    <property type="match status" value="1"/>
</dbReference>
<dbReference type="PANTHER" id="PTHR10906">
    <property type="entry name" value="SECY/SEC61-ALPHA FAMILY MEMBER"/>
    <property type="match status" value="1"/>
</dbReference>
<dbReference type="Pfam" id="PF00344">
    <property type="entry name" value="SecY"/>
    <property type="match status" value="1"/>
</dbReference>
<dbReference type="PIRSF" id="PIRSF004557">
    <property type="entry name" value="SecY"/>
    <property type="match status" value="1"/>
</dbReference>
<dbReference type="PRINTS" id="PR00303">
    <property type="entry name" value="SECYTRNLCASE"/>
</dbReference>
<dbReference type="SUPFAM" id="SSF103491">
    <property type="entry name" value="Preprotein translocase SecY subunit"/>
    <property type="match status" value="1"/>
</dbReference>
<keyword id="KW-1003">Cell membrane</keyword>
<keyword id="KW-0472">Membrane</keyword>
<keyword id="KW-0653">Protein transport</keyword>
<keyword id="KW-1185">Reference proteome</keyword>
<keyword id="KW-0811">Translocation</keyword>
<keyword id="KW-0812">Transmembrane</keyword>
<keyword id="KW-1133">Transmembrane helix</keyword>
<keyword id="KW-0813">Transport</keyword>
<comment type="function">
    <text evidence="1">Part of the accessory SecA2/SecY2 system specifically required for export of possible cell wall proteins. The central subunit of a protein translocation channel.</text>
</comment>
<comment type="subunit">
    <text evidence="1">Component of the accessory SecA2/SecY2 protein translocase complex required to export cell wall proteins. May form heterotrimers with SecE and SecG subunits.</text>
</comment>
<comment type="subcellular location">
    <subcellularLocation>
        <location evidence="1">Cell membrane</location>
        <topology evidence="1">Multi-pass membrane protein</topology>
    </subcellularLocation>
</comment>
<comment type="similarity">
    <text evidence="1">Belongs to the SecY/SEC61-alpha family. SecY2 subfamily.</text>
</comment>
<proteinExistence type="inferred from homology"/>
<gene>
    <name evidence="1" type="primary">secY2</name>
    <name type="ordered locus">SSA_0832</name>
</gene>
<protein>
    <recommendedName>
        <fullName evidence="1">Accessory Sec system protein translocase subunit SecY2</fullName>
    </recommendedName>
</protein>
<name>SECY2_STRSV</name>
<organism>
    <name type="scientific">Streptococcus sanguinis (strain SK36)</name>
    <dbReference type="NCBI Taxonomy" id="388919"/>
    <lineage>
        <taxon>Bacteria</taxon>
        <taxon>Bacillati</taxon>
        <taxon>Bacillota</taxon>
        <taxon>Bacilli</taxon>
        <taxon>Lactobacillales</taxon>
        <taxon>Streptococcaceae</taxon>
        <taxon>Streptococcus</taxon>
    </lineage>
</organism>
<evidence type="ECO:0000255" key="1">
    <source>
        <dbReference type="HAMAP-Rule" id="MF_01466"/>
    </source>
</evidence>
<feature type="chain" id="PRO_0000414212" description="Accessory Sec system protein translocase subunit SecY2">
    <location>
        <begin position="1"/>
        <end position="407"/>
    </location>
</feature>
<feature type="transmembrane region" description="Helical" evidence="1">
    <location>
        <begin position="13"/>
        <end position="33"/>
    </location>
</feature>
<feature type="transmembrane region" description="Helical" evidence="1">
    <location>
        <begin position="65"/>
        <end position="85"/>
    </location>
</feature>
<feature type="transmembrane region" description="Helical" evidence="1">
    <location>
        <begin position="104"/>
        <end position="124"/>
    </location>
</feature>
<feature type="transmembrane region" description="Helical" evidence="1">
    <location>
        <begin position="133"/>
        <end position="153"/>
    </location>
</feature>
<feature type="transmembrane region" description="Helical" evidence="1">
    <location>
        <begin position="158"/>
        <end position="178"/>
    </location>
</feature>
<feature type="transmembrane region" description="Helical" evidence="1">
    <location>
        <begin position="190"/>
        <end position="210"/>
    </location>
</feature>
<feature type="transmembrane region" description="Helical" evidence="1">
    <location>
        <begin position="248"/>
        <end position="268"/>
    </location>
</feature>
<feature type="transmembrane region" description="Helical" evidence="1">
    <location>
        <begin position="287"/>
        <end position="307"/>
    </location>
</feature>
<feature type="transmembrane region" description="Helical" evidence="1">
    <location>
        <begin position="345"/>
        <end position="365"/>
    </location>
</feature>
<feature type="transmembrane region" description="Helical" evidence="1">
    <location>
        <begin position="370"/>
        <end position="390"/>
    </location>
</feature>
<reference key="1">
    <citation type="journal article" date="2007" name="J. Bacteriol.">
        <title>Genome of the opportunistic pathogen Streptococcus sanguinis.</title>
        <authorList>
            <person name="Xu P."/>
            <person name="Alves J.M."/>
            <person name="Kitten T."/>
            <person name="Brown A."/>
            <person name="Chen Z."/>
            <person name="Ozaki L.S."/>
            <person name="Manque P."/>
            <person name="Ge X."/>
            <person name="Serrano M.G."/>
            <person name="Puiu D."/>
            <person name="Hendricks S."/>
            <person name="Wang Y."/>
            <person name="Chaplin M.D."/>
            <person name="Akan D."/>
            <person name="Paik S."/>
            <person name="Peterson D.L."/>
            <person name="Macrina F.L."/>
            <person name="Buck G.A."/>
        </authorList>
    </citation>
    <scope>NUCLEOTIDE SEQUENCE [LARGE SCALE GENOMIC DNA]</scope>
    <source>
        <strain>SK36</strain>
    </source>
</reference>